<gene>
    <name evidence="1" type="primary">prfA</name>
    <name type="ordered locus">SbBS512_E1375</name>
</gene>
<sequence length="360" mass="40516">MKPSIVAKLEALHERHEEVQALLGDAQTIADQERFRALSREYAQLSDVSRCFTDWQQVQEDIETAQMMLDDPEMREMAQDELRKAKEKSEQLEQQLQVLLLPKDPDDERNAFLEVRAGTGGDEAALFAGDLFRMYSRYAEARRWRVEIMSASEGEHGGYKEIIAKISGDGVYGRLKFESGGHRVQRVPATESQGRIHTSACTVAVMPELPDAELPDINPADLRIDTFRSSGAGGQHVNTTDSAIRITHLPTGIVVECQDERSQHKNKAKALSVLGARIHAAEMAKRQQAEASTRRNLLGSGDRSDRNRTYNFPQGRVTDHRINLTLYRLDEVMEGKLDMLIEPIIQEHQADQLAALSEQE</sequence>
<name>RF1_SHIB3</name>
<feature type="chain" id="PRO_1000093505" description="Peptide chain release factor 1">
    <location>
        <begin position="1"/>
        <end position="360"/>
    </location>
</feature>
<feature type="region of interest" description="Disordered" evidence="2">
    <location>
        <begin position="285"/>
        <end position="313"/>
    </location>
</feature>
<feature type="modified residue" description="N5-methylglutamine" evidence="1">
    <location>
        <position position="235"/>
    </location>
</feature>
<comment type="function">
    <text evidence="1">Peptide chain release factor 1 directs the termination of translation in response to the peptide chain termination codons UAG and UAA.</text>
</comment>
<comment type="subcellular location">
    <subcellularLocation>
        <location evidence="1">Cytoplasm</location>
    </subcellularLocation>
</comment>
<comment type="PTM">
    <text evidence="1">Methylated by PrmC. Methylation increases the termination efficiency of RF1.</text>
</comment>
<comment type="similarity">
    <text evidence="1">Belongs to the prokaryotic/mitochondrial release factor family.</text>
</comment>
<dbReference type="EMBL" id="CP001063">
    <property type="protein sequence ID" value="ACD10331.1"/>
    <property type="molecule type" value="Genomic_DNA"/>
</dbReference>
<dbReference type="RefSeq" id="WP_000804740.1">
    <property type="nucleotide sequence ID" value="NC_010658.1"/>
</dbReference>
<dbReference type="SMR" id="B2TZV9"/>
<dbReference type="STRING" id="344609.SbBS512_E1375"/>
<dbReference type="KEGG" id="sbc:SbBS512_E1375"/>
<dbReference type="HOGENOM" id="CLU_036856_0_1_6"/>
<dbReference type="Proteomes" id="UP000001030">
    <property type="component" value="Chromosome"/>
</dbReference>
<dbReference type="GO" id="GO:0005737">
    <property type="term" value="C:cytoplasm"/>
    <property type="evidence" value="ECO:0007669"/>
    <property type="project" value="UniProtKB-SubCell"/>
</dbReference>
<dbReference type="GO" id="GO:0016149">
    <property type="term" value="F:translation release factor activity, codon specific"/>
    <property type="evidence" value="ECO:0007669"/>
    <property type="project" value="UniProtKB-UniRule"/>
</dbReference>
<dbReference type="FunFam" id="3.30.160.20:FF:000004">
    <property type="entry name" value="Peptide chain release factor 1"/>
    <property type="match status" value="1"/>
</dbReference>
<dbReference type="FunFam" id="3.30.70.1660:FF:000002">
    <property type="entry name" value="Peptide chain release factor 1"/>
    <property type="match status" value="1"/>
</dbReference>
<dbReference type="FunFam" id="3.30.70.1660:FF:000004">
    <property type="entry name" value="Peptide chain release factor 1"/>
    <property type="match status" value="1"/>
</dbReference>
<dbReference type="Gene3D" id="3.30.160.20">
    <property type="match status" value="1"/>
</dbReference>
<dbReference type="Gene3D" id="3.30.70.1660">
    <property type="match status" value="1"/>
</dbReference>
<dbReference type="Gene3D" id="6.10.140.1950">
    <property type="match status" value="1"/>
</dbReference>
<dbReference type="HAMAP" id="MF_00093">
    <property type="entry name" value="Rel_fac_1"/>
    <property type="match status" value="1"/>
</dbReference>
<dbReference type="InterPro" id="IPR005139">
    <property type="entry name" value="PCRF"/>
</dbReference>
<dbReference type="InterPro" id="IPR000352">
    <property type="entry name" value="Pep_chain_release_fac_I"/>
</dbReference>
<dbReference type="InterPro" id="IPR045853">
    <property type="entry name" value="Pep_chain_release_fac_I_sf"/>
</dbReference>
<dbReference type="InterPro" id="IPR050057">
    <property type="entry name" value="Prokaryotic/Mito_RF"/>
</dbReference>
<dbReference type="InterPro" id="IPR004373">
    <property type="entry name" value="RF-1"/>
</dbReference>
<dbReference type="NCBIfam" id="TIGR00019">
    <property type="entry name" value="prfA"/>
    <property type="match status" value="1"/>
</dbReference>
<dbReference type="NCBIfam" id="NF001859">
    <property type="entry name" value="PRK00591.1"/>
    <property type="match status" value="1"/>
</dbReference>
<dbReference type="PANTHER" id="PTHR43804">
    <property type="entry name" value="LD18447P"/>
    <property type="match status" value="1"/>
</dbReference>
<dbReference type="PANTHER" id="PTHR43804:SF7">
    <property type="entry name" value="LD18447P"/>
    <property type="match status" value="1"/>
</dbReference>
<dbReference type="Pfam" id="PF03462">
    <property type="entry name" value="PCRF"/>
    <property type="match status" value="1"/>
</dbReference>
<dbReference type="Pfam" id="PF00472">
    <property type="entry name" value="RF-1"/>
    <property type="match status" value="1"/>
</dbReference>
<dbReference type="SMART" id="SM00937">
    <property type="entry name" value="PCRF"/>
    <property type="match status" value="1"/>
</dbReference>
<dbReference type="SUPFAM" id="SSF75620">
    <property type="entry name" value="Release factor"/>
    <property type="match status" value="1"/>
</dbReference>
<dbReference type="PROSITE" id="PS00745">
    <property type="entry name" value="RF_PROK_I"/>
    <property type="match status" value="1"/>
</dbReference>
<organism>
    <name type="scientific">Shigella boydii serotype 18 (strain CDC 3083-94 / BS512)</name>
    <dbReference type="NCBI Taxonomy" id="344609"/>
    <lineage>
        <taxon>Bacteria</taxon>
        <taxon>Pseudomonadati</taxon>
        <taxon>Pseudomonadota</taxon>
        <taxon>Gammaproteobacteria</taxon>
        <taxon>Enterobacterales</taxon>
        <taxon>Enterobacteriaceae</taxon>
        <taxon>Shigella</taxon>
    </lineage>
</organism>
<keyword id="KW-0963">Cytoplasm</keyword>
<keyword id="KW-0488">Methylation</keyword>
<keyword id="KW-0648">Protein biosynthesis</keyword>
<keyword id="KW-1185">Reference proteome</keyword>
<reference key="1">
    <citation type="submission" date="2008-05" db="EMBL/GenBank/DDBJ databases">
        <title>Complete sequence of Shigella boydii serotype 18 strain BS512.</title>
        <authorList>
            <person name="Rasko D.A."/>
            <person name="Rosovitz M."/>
            <person name="Maurelli A.T."/>
            <person name="Myers G."/>
            <person name="Seshadri R."/>
            <person name="Cer R."/>
            <person name="Jiang L."/>
            <person name="Ravel J."/>
            <person name="Sebastian Y."/>
        </authorList>
    </citation>
    <scope>NUCLEOTIDE SEQUENCE [LARGE SCALE GENOMIC DNA]</scope>
    <source>
        <strain>CDC 3083-94 / BS512</strain>
    </source>
</reference>
<evidence type="ECO:0000255" key="1">
    <source>
        <dbReference type="HAMAP-Rule" id="MF_00093"/>
    </source>
</evidence>
<evidence type="ECO:0000256" key="2">
    <source>
        <dbReference type="SAM" id="MobiDB-lite"/>
    </source>
</evidence>
<proteinExistence type="inferred from homology"/>
<accession>B2TZV9</accession>
<protein>
    <recommendedName>
        <fullName evidence="1">Peptide chain release factor 1</fullName>
        <shortName evidence="1">RF-1</shortName>
    </recommendedName>
</protein>